<evidence type="ECO:0000250" key="1">
    <source>
        <dbReference type="UniProtKB" id="Q9NVX7"/>
    </source>
</evidence>
<evidence type="ECO:0000255" key="2"/>
<evidence type="ECO:0000255" key="3">
    <source>
        <dbReference type="PROSITE-ProRule" id="PRU00037"/>
    </source>
</evidence>
<evidence type="ECO:0000305" key="4"/>
<proteinExistence type="evidence at transcript level"/>
<sequence>MESPEEPGASMDENYFVNYTFKDRSHSGRVAQGIMKLCLEEELFADVTISVEGREFQLHRLVLSAQSCFFRSMFTSNLKEAHNRVIVLQDVSESVFQLLVDYIYHGTVKLRAEELQEIYEVSDMYQLTSLFEECSRFLARTVQVGNCLQVMWLADRHSDPELYTAAKHCAKTHLAQLQNTEEFLHLPHHLLTDIISDGVPCSQNPTEAIEAWINFNKEEREAFAESLRTSLKEIGENVHIYLIGKESSRTHSLAVSLHCAEDDSISVSGQNSLCHQITAACKHGGDLYVVGGSIPRRMWKCNNATVDWEWCAPLPRDRLQHTLVSVPGKDAIYSLGGKTLQDTLSNAVIYYRVGDNVWTETTQLEVAVSGAAGANLNGIIYLLGGEENDLDFFTKPSRLIQCFDTETDKCHVKPYVLPFAGRMHAAVHKDLVFIVAEGDSLVCYNPLLDSFTRLCLPEAWSSAPSLWKIASCNGSIYVFRDRYKKGDANTYKLDPATSAVTVTRGIKVLLTNLQFVLA</sequence>
<protein>
    <recommendedName>
        <fullName>Kelch repeat and BTB domain-containing protein 4</fullName>
    </recommendedName>
</protein>
<keyword id="KW-0880">Kelch repeat</keyword>
<keyword id="KW-1185">Reference proteome</keyword>
<keyword id="KW-0677">Repeat</keyword>
<comment type="function">
    <text evidence="1">Substrate-specific adapter of a BCR (BTB-CUL3-RBX1) E3 ubiquitin ligase complex which targets CoREST corepressor complex components RCOR1, KDM1A/LSD1 and HDAC2 for proteasomal degradation. RCOR1 is likely to be the primary target while degradation of KDM1A and HDAC2 is likely due to their association with RCOR1. Also targets RCOR3, MIER2 and MIER3 for proteasomal degradation as well as associated proteins ZNF217 and RREB1. Degradation is dependent on the presence of an ELM2 domain in the target proteins.</text>
</comment>
<comment type="subunit">
    <text evidence="1">Component of the BCR(KBTBD4) E3 ubiquitin ligase complex, at least composed of CUL3, KBTBD4 and RBX1.</text>
</comment>
<gene>
    <name type="primary">KBTBD4</name>
</gene>
<dbReference type="EMBL" id="CR857744">
    <property type="protein sequence ID" value="CAH90011.1"/>
    <property type="molecule type" value="mRNA"/>
</dbReference>
<dbReference type="EMBL" id="CR861168">
    <property type="protein sequence ID" value="CAH93240.1"/>
    <property type="molecule type" value="mRNA"/>
</dbReference>
<dbReference type="RefSeq" id="NP_001126905.2">
    <property type="nucleotide sequence ID" value="NM_001133433.1"/>
</dbReference>
<dbReference type="RefSeq" id="XP_054379807.1">
    <property type="nucleotide sequence ID" value="XM_054523832.2"/>
</dbReference>
<dbReference type="BMRB" id="Q5R4S6"/>
<dbReference type="SMR" id="Q5R4S6"/>
<dbReference type="FunCoup" id="Q5R4S6">
    <property type="interactions" value="2003"/>
</dbReference>
<dbReference type="STRING" id="9601.ENSPPYP00000003784"/>
<dbReference type="Ensembl" id="ENSPPYT00000060415.1">
    <property type="protein sequence ID" value="ENSPPYP00000038383.1"/>
    <property type="gene ID" value="ENSPPYG00000003300.3"/>
</dbReference>
<dbReference type="GeneID" id="100173921"/>
<dbReference type="KEGG" id="pon:100173921"/>
<dbReference type="CTD" id="55709"/>
<dbReference type="eggNOG" id="KOG4441">
    <property type="taxonomic scope" value="Eukaryota"/>
</dbReference>
<dbReference type="GeneTree" id="ENSGT00940000158775"/>
<dbReference type="InParanoid" id="Q5R4S6"/>
<dbReference type="OrthoDB" id="2311693at2759"/>
<dbReference type="Proteomes" id="UP000001595">
    <property type="component" value="Chromosome 11"/>
</dbReference>
<dbReference type="CDD" id="cd18481">
    <property type="entry name" value="BACK_KBTBD4"/>
    <property type="match status" value="1"/>
</dbReference>
<dbReference type="CDD" id="cd18272">
    <property type="entry name" value="BTB_POZ_KBTBD4"/>
    <property type="match status" value="1"/>
</dbReference>
<dbReference type="Gene3D" id="1.25.40.420">
    <property type="match status" value="1"/>
</dbReference>
<dbReference type="Gene3D" id="2.120.10.80">
    <property type="entry name" value="Kelch-type beta propeller"/>
    <property type="match status" value="1"/>
</dbReference>
<dbReference type="Gene3D" id="3.30.710.10">
    <property type="entry name" value="Potassium Channel Kv1.1, Chain A"/>
    <property type="match status" value="1"/>
</dbReference>
<dbReference type="InterPro" id="IPR011705">
    <property type="entry name" value="BACK"/>
</dbReference>
<dbReference type="InterPro" id="IPR017096">
    <property type="entry name" value="BTB-kelch_protein"/>
</dbReference>
<dbReference type="InterPro" id="IPR000210">
    <property type="entry name" value="BTB/POZ_dom"/>
</dbReference>
<dbReference type="InterPro" id="IPR042884">
    <property type="entry name" value="KBTBD4"/>
</dbReference>
<dbReference type="InterPro" id="IPR042950">
    <property type="entry name" value="KBTBD4_BACK"/>
</dbReference>
<dbReference type="InterPro" id="IPR042949">
    <property type="entry name" value="KBTBD4_BTB_POZ"/>
</dbReference>
<dbReference type="InterPro" id="IPR015915">
    <property type="entry name" value="Kelch-typ_b-propeller"/>
</dbReference>
<dbReference type="InterPro" id="IPR011498">
    <property type="entry name" value="Kelch_2"/>
</dbReference>
<dbReference type="InterPro" id="IPR011333">
    <property type="entry name" value="SKP1/BTB/POZ_sf"/>
</dbReference>
<dbReference type="PANTHER" id="PTHR47195">
    <property type="entry name" value="KELCH REPEAT AND BTB DOMAIN-CONTAINING PROTEIN 4"/>
    <property type="match status" value="1"/>
</dbReference>
<dbReference type="PANTHER" id="PTHR47195:SF1">
    <property type="entry name" value="KELCH REPEAT AND BTB DOMAIN-CONTAINING PROTEIN 4"/>
    <property type="match status" value="1"/>
</dbReference>
<dbReference type="Pfam" id="PF07707">
    <property type="entry name" value="BACK"/>
    <property type="match status" value="1"/>
</dbReference>
<dbReference type="Pfam" id="PF00651">
    <property type="entry name" value="BTB"/>
    <property type="match status" value="1"/>
</dbReference>
<dbReference type="Pfam" id="PF07646">
    <property type="entry name" value="Kelch_2"/>
    <property type="match status" value="1"/>
</dbReference>
<dbReference type="PIRSF" id="PIRSF037037">
    <property type="entry name" value="Kelch-like_protein_gigaxonin"/>
    <property type="match status" value="1"/>
</dbReference>
<dbReference type="SMART" id="SM00875">
    <property type="entry name" value="BACK"/>
    <property type="match status" value="1"/>
</dbReference>
<dbReference type="SMART" id="SM00225">
    <property type="entry name" value="BTB"/>
    <property type="match status" value="1"/>
</dbReference>
<dbReference type="SUPFAM" id="SSF117281">
    <property type="entry name" value="Kelch motif"/>
    <property type="match status" value="1"/>
</dbReference>
<dbReference type="SUPFAM" id="SSF54695">
    <property type="entry name" value="POZ domain"/>
    <property type="match status" value="1"/>
</dbReference>
<dbReference type="PROSITE" id="PS50097">
    <property type="entry name" value="BTB"/>
    <property type="match status" value="1"/>
</dbReference>
<feature type="chain" id="PRO_0000260302" description="Kelch repeat and BTB domain-containing protein 4">
    <location>
        <begin position="1"/>
        <end position="518"/>
    </location>
</feature>
<feature type="domain" description="BTB" evidence="3">
    <location>
        <begin position="45"/>
        <end position="112"/>
    </location>
</feature>
<feature type="domain" description="BACK">
    <location>
        <begin position="147"/>
        <end position="239"/>
    </location>
</feature>
<feature type="repeat" description="Kelch 1" evidence="2">
    <location>
        <begin position="239"/>
        <end position="285"/>
    </location>
</feature>
<feature type="repeat" description="Kelch 2" evidence="2">
    <location>
        <begin position="286"/>
        <end position="328"/>
    </location>
</feature>
<feature type="repeat" description="Kelch 3" evidence="2">
    <location>
        <begin position="331"/>
        <end position="378"/>
    </location>
</feature>
<feature type="repeat" description="Kelch 4" evidence="2">
    <location>
        <begin position="380"/>
        <end position="430"/>
    </location>
</feature>
<feature type="repeat" description="Kelch 5" evidence="2">
    <location>
        <begin position="432"/>
        <end position="481"/>
    </location>
</feature>
<feature type="sequence conflict" description="In Ref. 1; CAH90011." evidence="4" ref="1">
    <original>T</original>
    <variation>A</variation>
    <location>
        <position position="229"/>
    </location>
</feature>
<feature type="sequence conflict" description="In Ref. 1; CAH90011." evidence="4" ref="1">
    <original>I</original>
    <variation>S</variation>
    <location>
        <position position="243"/>
    </location>
</feature>
<feature type="sequence conflict" description="In Ref. 1; CAH90011." evidence="4" ref="1">
    <original>S</original>
    <variation>I</variation>
    <location>
        <position position="272"/>
    </location>
</feature>
<feature type="sequence conflict" description="In Ref. 1; CAH90011." evidence="4" ref="1">
    <original>E</original>
    <variation>GGG</variation>
    <location>
        <position position="386"/>
    </location>
</feature>
<feature type="sequence conflict" description="In Ref. 1; CAH90011." evidence="4" ref="1">
    <original>D</original>
    <variation>G</variation>
    <location>
        <position position="430"/>
    </location>
</feature>
<reference key="1">
    <citation type="submission" date="2004-11" db="EMBL/GenBank/DDBJ databases">
        <authorList>
            <consortium name="The German cDNA consortium"/>
        </authorList>
    </citation>
    <scope>NUCLEOTIDE SEQUENCE [LARGE SCALE MRNA]</scope>
    <source>
        <tissue>Brain cortex</tissue>
        <tissue>Kidney</tissue>
    </source>
</reference>
<organism>
    <name type="scientific">Pongo abelii</name>
    <name type="common">Sumatran orangutan</name>
    <name type="synonym">Pongo pygmaeus abelii</name>
    <dbReference type="NCBI Taxonomy" id="9601"/>
    <lineage>
        <taxon>Eukaryota</taxon>
        <taxon>Metazoa</taxon>
        <taxon>Chordata</taxon>
        <taxon>Craniata</taxon>
        <taxon>Vertebrata</taxon>
        <taxon>Euteleostomi</taxon>
        <taxon>Mammalia</taxon>
        <taxon>Eutheria</taxon>
        <taxon>Euarchontoglires</taxon>
        <taxon>Primates</taxon>
        <taxon>Haplorrhini</taxon>
        <taxon>Catarrhini</taxon>
        <taxon>Hominidae</taxon>
        <taxon>Pongo</taxon>
    </lineage>
</organism>
<name>KBTB4_PONAB</name>
<accession>Q5R4S6</accession>
<accession>Q5RDZ6</accession>